<evidence type="ECO:0000255" key="1">
    <source>
        <dbReference type="HAMAP-Rule" id="MF_01321"/>
    </source>
</evidence>
<dbReference type="EC" id="2.7.7.6" evidence="1"/>
<dbReference type="EMBL" id="BX908798">
    <property type="protein sequence ID" value="CAF23328.1"/>
    <property type="molecule type" value="Genomic_DNA"/>
</dbReference>
<dbReference type="RefSeq" id="WP_011175154.1">
    <property type="nucleotide sequence ID" value="NC_005861.2"/>
</dbReference>
<dbReference type="SMR" id="Q6MDM1"/>
<dbReference type="STRING" id="264201.pc0604"/>
<dbReference type="eggNOG" id="COG0085">
    <property type="taxonomic scope" value="Bacteria"/>
</dbReference>
<dbReference type="HOGENOM" id="CLU_000524_4_1_0"/>
<dbReference type="Proteomes" id="UP000000529">
    <property type="component" value="Chromosome"/>
</dbReference>
<dbReference type="GO" id="GO:0000428">
    <property type="term" value="C:DNA-directed RNA polymerase complex"/>
    <property type="evidence" value="ECO:0007669"/>
    <property type="project" value="UniProtKB-KW"/>
</dbReference>
<dbReference type="GO" id="GO:0003677">
    <property type="term" value="F:DNA binding"/>
    <property type="evidence" value="ECO:0007669"/>
    <property type="project" value="UniProtKB-UniRule"/>
</dbReference>
<dbReference type="GO" id="GO:0003899">
    <property type="term" value="F:DNA-directed RNA polymerase activity"/>
    <property type="evidence" value="ECO:0007669"/>
    <property type="project" value="UniProtKB-UniRule"/>
</dbReference>
<dbReference type="GO" id="GO:0032549">
    <property type="term" value="F:ribonucleoside binding"/>
    <property type="evidence" value="ECO:0007669"/>
    <property type="project" value="InterPro"/>
</dbReference>
<dbReference type="GO" id="GO:0006351">
    <property type="term" value="P:DNA-templated transcription"/>
    <property type="evidence" value="ECO:0007669"/>
    <property type="project" value="UniProtKB-UniRule"/>
</dbReference>
<dbReference type="CDD" id="cd00653">
    <property type="entry name" value="RNA_pol_B_RPB2"/>
    <property type="match status" value="1"/>
</dbReference>
<dbReference type="FunFam" id="3.90.1800.10:FF:000001">
    <property type="entry name" value="DNA-directed RNA polymerase subunit beta"/>
    <property type="match status" value="1"/>
</dbReference>
<dbReference type="Gene3D" id="2.40.50.100">
    <property type="match status" value="1"/>
</dbReference>
<dbReference type="Gene3D" id="2.40.50.150">
    <property type="match status" value="1"/>
</dbReference>
<dbReference type="Gene3D" id="3.90.1100.10">
    <property type="match status" value="3"/>
</dbReference>
<dbReference type="Gene3D" id="2.40.270.10">
    <property type="entry name" value="DNA-directed RNA polymerase, subunit 2, domain 6"/>
    <property type="match status" value="2"/>
</dbReference>
<dbReference type="Gene3D" id="3.90.1800.10">
    <property type="entry name" value="RNA polymerase alpha subunit dimerisation domain"/>
    <property type="match status" value="1"/>
</dbReference>
<dbReference type="HAMAP" id="MF_01321">
    <property type="entry name" value="RNApol_bact_RpoB"/>
    <property type="match status" value="1"/>
</dbReference>
<dbReference type="InterPro" id="IPR019462">
    <property type="entry name" value="DNA-dir_RNA_pol_bsu_external_1"/>
</dbReference>
<dbReference type="InterPro" id="IPR015712">
    <property type="entry name" value="DNA-dir_RNA_pol_su2"/>
</dbReference>
<dbReference type="InterPro" id="IPR007120">
    <property type="entry name" value="DNA-dir_RNAP_su2_dom"/>
</dbReference>
<dbReference type="InterPro" id="IPR037033">
    <property type="entry name" value="DNA-dir_RNAP_su2_hyb_sf"/>
</dbReference>
<dbReference type="InterPro" id="IPR010243">
    <property type="entry name" value="RNA_pol_bsu_bac"/>
</dbReference>
<dbReference type="InterPro" id="IPR007121">
    <property type="entry name" value="RNA_pol_bsu_CS"/>
</dbReference>
<dbReference type="InterPro" id="IPR007644">
    <property type="entry name" value="RNA_pol_bsu_protrusion"/>
</dbReference>
<dbReference type="InterPro" id="IPR007642">
    <property type="entry name" value="RNA_pol_Rpb2_2"/>
</dbReference>
<dbReference type="InterPro" id="IPR007645">
    <property type="entry name" value="RNA_pol_Rpb2_3"/>
</dbReference>
<dbReference type="InterPro" id="IPR007641">
    <property type="entry name" value="RNA_pol_Rpb2_7"/>
</dbReference>
<dbReference type="InterPro" id="IPR014724">
    <property type="entry name" value="RNA_pol_RPB2_OB-fold"/>
</dbReference>
<dbReference type="NCBIfam" id="NF001616">
    <property type="entry name" value="PRK00405.1"/>
    <property type="match status" value="1"/>
</dbReference>
<dbReference type="NCBIfam" id="TIGR02013">
    <property type="entry name" value="rpoB"/>
    <property type="match status" value="1"/>
</dbReference>
<dbReference type="PANTHER" id="PTHR20856">
    <property type="entry name" value="DNA-DIRECTED RNA POLYMERASE I SUBUNIT 2"/>
    <property type="match status" value="1"/>
</dbReference>
<dbReference type="Pfam" id="PF04563">
    <property type="entry name" value="RNA_pol_Rpb2_1"/>
    <property type="match status" value="1"/>
</dbReference>
<dbReference type="Pfam" id="PF04561">
    <property type="entry name" value="RNA_pol_Rpb2_2"/>
    <property type="match status" value="2"/>
</dbReference>
<dbReference type="Pfam" id="PF04565">
    <property type="entry name" value="RNA_pol_Rpb2_3"/>
    <property type="match status" value="1"/>
</dbReference>
<dbReference type="Pfam" id="PF10385">
    <property type="entry name" value="RNA_pol_Rpb2_45"/>
    <property type="match status" value="1"/>
</dbReference>
<dbReference type="Pfam" id="PF00562">
    <property type="entry name" value="RNA_pol_Rpb2_6"/>
    <property type="match status" value="1"/>
</dbReference>
<dbReference type="Pfam" id="PF04560">
    <property type="entry name" value="RNA_pol_Rpb2_7"/>
    <property type="match status" value="1"/>
</dbReference>
<dbReference type="SUPFAM" id="SSF64484">
    <property type="entry name" value="beta and beta-prime subunits of DNA dependent RNA-polymerase"/>
    <property type="match status" value="1"/>
</dbReference>
<dbReference type="PROSITE" id="PS01166">
    <property type="entry name" value="RNA_POL_BETA"/>
    <property type="match status" value="1"/>
</dbReference>
<name>RPOB_PARUW</name>
<organism>
    <name type="scientific">Protochlamydia amoebophila (strain UWE25)</name>
    <dbReference type="NCBI Taxonomy" id="264201"/>
    <lineage>
        <taxon>Bacteria</taxon>
        <taxon>Pseudomonadati</taxon>
        <taxon>Chlamydiota</taxon>
        <taxon>Chlamydiia</taxon>
        <taxon>Parachlamydiales</taxon>
        <taxon>Parachlamydiaceae</taxon>
        <taxon>Candidatus Protochlamydia</taxon>
    </lineage>
</organism>
<feature type="chain" id="PRO_0000224087" description="DNA-directed RNA polymerase subunit beta">
    <location>
        <begin position="1"/>
        <end position="1254"/>
    </location>
</feature>
<reference key="1">
    <citation type="journal article" date="2004" name="Science">
        <title>Illuminating the evolutionary history of chlamydiae.</title>
        <authorList>
            <person name="Horn M."/>
            <person name="Collingro A."/>
            <person name="Schmitz-Esser S."/>
            <person name="Beier C.L."/>
            <person name="Purkhold U."/>
            <person name="Fartmann B."/>
            <person name="Brandt P."/>
            <person name="Nyakatura G.J."/>
            <person name="Droege M."/>
            <person name="Frishman D."/>
            <person name="Rattei T."/>
            <person name="Mewes H.-W."/>
            <person name="Wagner M."/>
        </authorList>
    </citation>
    <scope>NUCLEOTIDE SEQUENCE [LARGE SCALE GENOMIC DNA]</scope>
    <source>
        <strain>UWE25</strain>
    </source>
</reference>
<gene>
    <name evidence="1" type="primary">rpoB</name>
    <name type="ordered locus">pc0604</name>
</gene>
<protein>
    <recommendedName>
        <fullName evidence="1">DNA-directed RNA polymerase subunit beta</fullName>
        <shortName evidence="1">RNAP subunit beta</shortName>
        <ecNumber evidence="1">2.7.7.6</ecNumber>
    </recommendedName>
    <alternativeName>
        <fullName evidence="1">RNA polymerase subunit beta</fullName>
    </alternativeName>
    <alternativeName>
        <fullName evidence="1">Transcriptase subunit beta</fullName>
    </alternativeName>
</protein>
<accession>Q6MDM1</accession>
<comment type="function">
    <text evidence="1">DNA-dependent RNA polymerase catalyzes the transcription of DNA into RNA using the four ribonucleoside triphosphates as substrates.</text>
</comment>
<comment type="catalytic activity">
    <reaction evidence="1">
        <text>RNA(n) + a ribonucleoside 5'-triphosphate = RNA(n+1) + diphosphate</text>
        <dbReference type="Rhea" id="RHEA:21248"/>
        <dbReference type="Rhea" id="RHEA-COMP:14527"/>
        <dbReference type="Rhea" id="RHEA-COMP:17342"/>
        <dbReference type="ChEBI" id="CHEBI:33019"/>
        <dbReference type="ChEBI" id="CHEBI:61557"/>
        <dbReference type="ChEBI" id="CHEBI:140395"/>
        <dbReference type="EC" id="2.7.7.6"/>
    </reaction>
</comment>
<comment type="subunit">
    <text evidence="1">The RNAP catalytic core consists of 2 alpha, 1 beta, 1 beta' and 1 omega subunit. When a sigma factor is associated with the core the holoenzyme is formed, which can initiate transcription.</text>
</comment>
<comment type="similarity">
    <text evidence="1">Belongs to the RNA polymerase beta chain family.</text>
</comment>
<sequence>MLQRPPHRESFNDKEEIIDLPNLIEIQIKSYNQFLQADKFPDERENIGLQEVFTEIFPIKSYDEKTILEFLSYNLGVPKYNPEECIRRGITYNVTLKVKFRLTDETGIKEEEVYMGTIPVMTDKGTFIVNGAERVVVSQLHRSPGICFEQERHSRGNVIYSFRIIPYRGSWLEGAFDTNDLIHIYIDRKKRRRKILATTFIRALGYSSNSDIIEEFFTTRKYKIKNEKEFAKLVGKILAQDVVDEESGLVFGKASEKLTTAMLKRIVDAGIDVIRIAEDADETSPVIKMLAKDPTDSYESALKDFYRKIRPGEPATLSNARSAIMRLFFDPKRYNLGRVGRYKLNSKLGCEINDEKLQTVTLDKEDVIGALKYLIMLKSGSEEASIDDIDHLGNRRVRSVGELIQNQCRIGLARMEKIIRERMNLFDFSSDTLTPGKIVSAKGLSGVLKDFFGRSQLSQFMDQTNPIAELTHKRRLSSLGPGGLNRDRAGFEVRDVHTSHYGRICPIETPEGPNIGLISSLSSFAKINEFGFIETPYRIVREGVVTDEIEYMTADQEEQCVIAQASAPLDEYHMFAEPICWARYKGEQFETDTKNVTHMDVSPKQLVSIVTGLIPFLEHDDANRALMGSNMQRQGVPLLKPTAPIVGTGLEARAARDSGAVLIAHEDGVVDYVDGLKIVISPDDNRLEKRTYLLKKFIRSNAGTCINQRPLCHVGDKIKAGDVIADGPATDKGEVALGRNVLVAFMPWFGYNYEDAIIISEKLLREDYYTSLYIEEFELTARDTKLGKEEITRDIPNVSEETLRNLNDDGIIRIGAEVKPGDTLVGKITPKSETELAPEERLLRAIFGDKASDVKDASLIAPPGTEGVVMDVKVFSRRDRLSKTDDELVEEASKLKDIQREYKSNQAQLRTEKHERVGALLLNETAPGNIVHRRTAEIIVDEGDLITQDLIEALEKESVEDLLMPENDIYTTLRQILHDYEIALQTVETQYKTQLEFMRKGDTDLDPGVIRQVKVYVASKRKLQVGDKMAGRHGNKGVVSKIVPEADMPFLSTGQTIEIILNPLGVPSRMNMGQLFETHLGIAAKHTGITVKSPVFEGFPEEKIWEMMKKAGLPEDGKFFLYDGCSGERFDNSVVVGYIYMLKLSHLVADKIHARAVGPYSLVTQQPLGGKAQMGGQRFGEMEVWAAEAYGAAHLLQEMLTVKSDDVAGRTRIYESIVKGENLLKSGTPESFNVLIKEMQGLGLNVYTEAVDDS</sequence>
<proteinExistence type="inferred from homology"/>
<keyword id="KW-0240">DNA-directed RNA polymerase</keyword>
<keyword id="KW-0548">Nucleotidyltransferase</keyword>
<keyword id="KW-1185">Reference proteome</keyword>
<keyword id="KW-0804">Transcription</keyword>
<keyword id="KW-0808">Transferase</keyword>